<feature type="chain" id="PRO_0000278487" description="Transmembrane protein 78">
    <location>
        <begin position="1"/>
        <end position="136"/>
    </location>
</feature>
<feature type="transmembrane region" description="Helical" evidence="1">
    <location>
        <begin position="49"/>
        <end position="68"/>
    </location>
</feature>
<feature type="transmembrane region" description="Helical" evidence="1">
    <location>
        <begin position="78"/>
        <end position="100"/>
    </location>
</feature>
<feature type="sequence conflict" description="In Ref. 1; AK097487." evidence="2" ref="1">
    <original>T</original>
    <variation>A</variation>
    <location>
        <position position="133"/>
    </location>
</feature>
<proteinExistence type="evidence at transcript level"/>
<dbReference type="EMBL" id="AK097487">
    <property type="status" value="NOT_ANNOTATED_CDS"/>
    <property type="molecule type" value="mRNA"/>
</dbReference>
<dbReference type="EMBL" id="AL162595">
    <property type="status" value="NOT_ANNOTATED_CDS"/>
    <property type="molecule type" value="Genomic_DNA"/>
</dbReference>
<dbReference type="GlyGen" id="Q5T7P6">
    <property type="glycosylation" value="1 site, 1 O-linked glycan (1 site)"/>
</dbReference>
<dbReference type="iPTMnet" id="Q5T7P6"/>
<dbReference type="BioMuta" id="TMEM78"/>
<dbReference type="MassIVE" id="Q5T7P6"/>
<dbReference type="PaxDb" id="9606-ENSP00000324799"/>
<dbReference type="PeptideAtlas" id="Q5T7P6"/>
<dbReference type="UCSC" id="uc057qfo.1">
    <property type="organism name" value="human"/>
</dbReference>
<dbReference type="AGR" id="HGNC:32307"/>
<dbReference type="GeneCards" id="TMEM78"/>
<dbReference type="HGNC" id="HGNC:32307">
    <property type="gene designation" value="TMEM78"/>
</dbReference>
<dbReference type="neXtProt" id="NX_Q5T7P6"/>
<dbReference type="eggNOG" id="ENOG502TEW9">
    <property type="taxonomic scope" value="Eukaryota"/>
</dbReference>
<dbReference type="HOGENOM" id="CLU_1874741_0_0_1"/>
<dbReference type="InParanoid" id="Q5T7P6"/>
<dbReference type="PAN-GO" id="Q5T7P6">
    <property type="GO annotations" value="0 GO annotations based on evolutionary models"/>
</dbReference>
<dbReference type="PathwayCommons" id="Q5T7P6"/>
<dbReference type="Pharos" id="Q5T7P6">
    <property type="development level" value="Tdark"/>
</dbReference>
<dbReference type="PRO" id="PR:Q5T7P6"/>
<dbReference type="Proteomes" id="UP000005640">
    <property type="component" value="Unplaced"/>
</dbReference>
<dbReference type="RNAct" id="Q5T7P6">
    <property type="molecule type" value="protein"/>
</dbReference>
<dbReference type="GO" id="GO:0016020">
    <property type="term" value="C:membrane"/>
    <property type="evidence" value="ECO:0007669"/>
    <property type="project" value="UniProtKB-SubCell"/>
</dbReference>
<dbReference type="PANTHER" id="PTHR12138">
    <property type="entry name" value="PRIMATE-EXPANDED PROTEIN FAMILY"/>
    <property type="match status" value="1"/>
</dbReference>
<dbReference type="PANTHER" id="PTHR12138:SF154">
    <property type="entry name" value="PROTEIN-SERINE_THREONINE PHOSPHATASE"/>
    <property type="match status" value="1"/>
</dbReference>
<reference key="1">
    <citation type="journal article" date="2004" name="Nat. Genet.">
        <title>Complete sequencing and characterization of 21,243 full-length human cDNAs.</title>
        <authorList>
            <person name="Ota T."/>
            <person name="Suzuki Y."/>
            <person name="Nishikawa T."/>
            <person name="Otsuki T."/>
            <person name="Sugiyama T."/>
            <person name="Irie R."/>
            <person name="Wakamatsu A."/>
            <person name="Hayashi K."/>
            <person name="Sato H."/>
            <person name="Nagai K."/>
            <person name="Kimura K."/>
            <person name="Makita H."/>
            <person name="Sekine M."/>
            <person name="Obayashi M."/>
            <person name="Nishi T."/>
            <person name="Shibahara T."/>
            <person name="Tanaka T."/>
            <person name="Ishii S."/>
            <person name="Yamamoto J."/>
            <person name="Saito K."/>
            <person name="Kawai Y."/>
            <person name="Isono Y."/>
            <person name="Nakamura Y."/>
            <person name="Nagahari K."/>
            <person name="Murakami K."/>
            <person name="Yasuda T."/>
            <person name="Iwayanagi T."/>
            <person name="Wagatsuma M."/>
            <person name="Shiratori A."/>
            <person name="Sudo H."/>
            <person name="Hosoiri T."/>
            <person name="Kaku Y."/>
            <person name="Kodaira H."/>
            <person name="Kondo H."/>
            <person name="Sugawara M."/>
            <person name="Takahashi M."/>
            <person name="Kanda K."/>
            <person name="Yokoi T."/>
            <person name="Furuya T."/>
            <person name="Kikkawa E."/>
            <person name="Omura Y."/>
            <person name="Abe K."/>
            <person name="Kamihara K."/>
            <person name="Katsuta N."/>
            <person name="Sato K."/>
            <person name="Tanikawa M."/>
            <person name="Yamazaki M."/>
            <person name="Ninomiya K."/>
            <person name="Ishibashi T."/>
            <person name="Yamashita H."/>
            <person name="Murakawa K."/>
            <person name="Fujimori K."/>
            <person name="Tanai H."/>
            <person name="Kimata M."/>
            <person name="Watanabe M."/>
            <person name="Hiraoka S."/>
            <person name="Chiba Y."/>
            <person name="Ishida S."/>
            <person name="Ono Y."/>
            <person name="Takiguchi S."/>
            <person name="Watanabe S."/>
            <person name="Yosida M."/>
            <person name="Hotuta T."/>
            <person name="Kusano J."/>
            <person name="Kanehori K."/>
            <person name="Takahashi-Fujii A."/>
            <person name="Hara H."/>
            <person name="Tanase T.-O."/>
            <person name="Nomura Y."/>
            <person name="Togiya S."/>
            <person name="Komai F."/>
            <person name="Hara R."/>
            <person name="Takeuchi K."/>
            <person name="Arita M."/>
            <person name="Imose N."/>
            <person name="Musashino K."/>
            <person name="Yuuki H."/>
            <person name="Oshima A."/>
            <person name="Sasaki N."/>
            <person name="Aotsuka S."/>
            <person name="Yoshikawa Y."/>
            <person name="Matsunawa H."/>
            <person name="Ichihara T."/>
            <person name="Shiohata N."/>
            <person name="Sano S."/>
            <person name="Moriya S."/>
            <person name="Momiyama H."/>
            <person name="Satoh N."/>
            <person name="Takami S."/>
            <person name="Terashima Y."/>
            <person name="Suzuki O."/>
            <person name="Nakagawa S."/>
            <person name="Senoh A."/>
            <person name="Mizoguchi H."/>
            <person name="Goto Y."/>
            <person name="Shimizu F."/>
            <person name="Wakebe H."/>
            <person name="Hishigaki H."/>
            <person name="Watanabe T."/>
            <person name="Sugiyama A."/>
            <person name="Takemoto M."/>
            <person name="Kawakami B."/>
            <person name="Yamazaki M."/>
            <person name="Watanabe K."/>
            <person name="Kumagai A."/>
            <person name="Itakura S."/>
            <person name="Fukuzumi Y."/>
            <person name="Fujimori Y."/>
            <person name="Komiyama M."/>
            <person name="Tashiro H."/>
            <person name="Tanigami A."/>
            <person name="Fujiwara T."/>
            <person name="Ono T."/>
            <person name="Yamada K."/>
            <person name="Fujii Y."/>
            <person name="Ozaki K."/>
            <person name="Hirao M."/>
            <person name="Ohmori Y."/>
            <person name="Kawabata A."/>
            <person name="Hikiji T."/>
            <person name="Kobatake N."/>
            <person name="Inagaki H."/>
            <person name="Ikema Y."/>
            <person name="Okamoto S."/>
            <person name="Okitani R."/>
            <person name="Kawakami T."/>
            <person name="Noguchi S."/>
            <person name="Itoh T."/>
            <person name="Shigeta K."/>
            <person name="Senba T."/>
            <person name="Matsumura K."/>
            <person name="Nakajima Y."/>
            <person name="Mizuno T."/>
            <person name="Morinaga M."/>
            <person name="Sasaki M."/>
            <person name="Togashi T."/>
            <person name="Oyama M."/>
            <person name="Hata H."/>
            <person name="Watanabe M."/>
            <person name="Komatsu T."/>
            <person name="Mizushima-Sugano J."/>
            <person name="Satoh T."/>
            <person name="Shirai Y."/>
            <person name="Takahashi Y."/>
            <person name="Nakagawa K."/>
            <person name="Okumura K."/>
            <person name="Nagase T."/>
            <person name="Nomura N."/>
            <person name="Kikuchi H."/>
            <person name="Masuho Y."/>
            <person name="Yamashita R."/>
            <person name="Nakai K."/>
            <person name="Yada T."/>
            <person name="Nakamura Y."/>
            <person name="Ohara O."/>
            <person name="Isogai T."/>
            <person name="Sugano S."/>
        </authorList>
    </citation>
    <scope>NUCLEOTIDE SEQUENCE [LARGE SCALE MRNA]</scope>
    <source>
        <tissue>Testis</tissue>
    </source>
</reference>
<reference key="2">
    <citation type="journal article" date="2006" name="Nature">
        <title>The DNA sequence and biological annotation of human chromosome 1.</title>
        <authorList>
            <person name="Gregory S.G."/>
            <person name="Barlow K.F."/>
            <person name="McLay K.E."/>
            <person name="Kaul R."/>
            <person name="Swarbreck D."/>
            <person name="Dunham A."/>
            <person name="Scott C.E."/>
            <person name="Howe K.L."/>
            <person name="Woodfine K."/>
            <person name="Spencer C.C.A."/>
            <person name="Jones M.C."/>
            <person name="Gillson C."/>
            <person name="Searle S."/>
            <person name="Zhou Y."/>
            <person name="Kokocinski F."/>
            <person name="McDonald L."/>
            <person name="Evans R."/>
            <person name="Phillips K."/>
            <person name="Atkinson A."/>
            <person name="Cooper R."/>
            <person name="Jones C."/>
            <person name="Hall R.E."/>
            <person name="Andrews T.D."/>
            <person name="Lloyd C."/>
            <person name="Ainscough R."/>
            <person name="Almeida J.P."/>
            <person name="Ambrose K.D."/>
            <person name="Anderson F."/>
            <person name="Andrew R.W."/>
            <person name="Ashwell R.I.S."/>
            <person name="Aubin K."/>
            <person name="Babbage A.K."/>
            <person name="Bagguley C.L."/>
            <person name="Bailey J."/>
            <person name="Beasley H."/>
            <person name="Bethel G."/>
            <person name="Bird C.P."/>
            <person name="Bray-Allen S."/>
            <person name="Brown J.Y."/>
            <person name="Brown A.J."/>
            <person name="Buckley D."/>
            <person name="Burton J."/>
            <person name="Bye J."/>
            <person name="Carder C."/>
            <person name="Chapman J.C."/>
            <person name="Clark S.Y."/>
            <person name="Clarke G."/>
            <person name="Clee C."/>
            <person name="Cobley V."/>
            <person name="Collier R.E."/>
            <person name="Corby N."/>
            <person name="Coville G.J."/>
            <person name="Davies J."/>
            <person name="Deadman R."/>
            <person name="Dunn M."/>
            <person name="Earthrowl M."/>
            <person name="Ellington A.G."/>
            <person name="Errington H."/>
            <person name="Frankish A."/>
            <person name="Frankland J."/>
            <person name="French L."/>
            <person name="Garner P."/>
            <person name="Garnett J."/>
            <person name="Gay L."/>
            <person name="Ghori M.R.J."/>
            <person name="Gibson R."/>
            <person name="Gilby L.M."/>
            <person name="Gillett W."/>
            <person name="Glithero R.J."/>
            <person name="Grafham D.V."/>
            <person name="Griffiths C."/>
            <person name="Griffiths-Jones S."/>
            <person name="Grocock R."/>
            <person name="Hammond S."/>
            <person name="Harrison E.S.I."/>
            <person name="Hart E."/>
            <person name="Haugen E."/>
            <person name="Heath P.D."/>
            <person name="Holmes S."/>
            <person name="Holt K."/>
            <person name="Howden P.J."/>
            <person name="Hunt A.R."/>
            <person name="Hunt S.E."/>
            <person name="Hunter G."/>
            <person name="Isherwood J."/>
            <person name="James R."/>
            <person name="Johnson C."/>
            <person name="Johnson D."/>
            <person name="Joy A."/>
            <person name="Kay M."/>
            <person name="Kershaw J.K."/>
            <person name="Kibukawa M."/>
            <person name="Kimberley A.M."/>
            <person name="King A."/>
            <person name="Knights A.J."/>
            <person name="Lad H."/>
            <person name="Laird G."/>
            <person name="Lawlor S."/>
            <person name="Leongamornlert D.A."/>
            <person name="Lloyd D.M."/>
            <person name="Loveland J."/>
            <person name="Lovell J."/>
            <person name="Lush M.J."/>
            <person name="Lyne R."/>
            <person name="Martin S."/>
            <person name="Mashreghi-Mohammadi M."/>
            <person name="Matthews L."/>
            <person name="Matthews N.S.W."/>
            <person name="McLaren S."/>
            <person name="Milne S."/>
            <person name="Mistry S."/>
            <person name="Moore M.J.F."/>
            <person name="Nickerson T."/>
            <person name="O'Dell C.N."/>
            <person name="Oliver K."/>
            <person name="Palmeiri A."/>
            <person name="Palmer S.A."/>
            <person name="Parker A."/>
            <person name="Patel D."/>
            <person name="Pearce A.V."/>
            <person name="Peck A.I."/>
            <person name="Pelan S."/>
            <person name="Phelps K."/>
            <person name="Phillimore B.J."/>
            <person name="Plumb R."/>
            <person name="Rajan J."/>
            <person name="Raymond C."/>
            <person name="Rouse G."/>
            <person name="Saenphimmachak C."/>
            <person name="Sehra H.K."/>
            <person name="Sheridan E."/>
            <person name="Shownkeen R."/>
            <person name="Sims S."/>
            <person name="Skuce C.D."/>
            <person name="Smith M."/>
            <person name="Steward C."/>
            <person name="Subramanian S."/>
            <person name="Sycamore N."/>
            <person name="Tracey A."/>
            <person name="Tromans A."/>
            <person name="Van Helmond Z."/>
            <person name="Wall M."/>
            <person name="Wallis J.M."/>
            <person name="White S."/>
            <person name="Whitehead S.L."/>
            <person name="Wilkinson J.E."/>
            <person name="Willey D.L."/>
            <person name="Williams H."/>
            <person name="Wilming L."/>
            <person name="Wray P.W."/>
            <person name="Wu Z."/>
            <person name="Coulson A."/>
            <person name="Vaudin M."/>
            <person name="Sulston J.E."/>
            <person name="Durbin R.M."/>
            <person name="Hubbard T."/>
            <person name="Wooster R."/>
            <person name="Dunham I."/>
            <person name="Carter N.P."/>
            <person name="McVean G."/>
            <person name="Ross M.T."/>
            <person name="Harrow J."/>
            <person name="Olson M.V."/>
            <person name="Beck S."/>
            <person name="Rogers J."/>
            <person name="Bentley D.R."/>
        </authorList>
    </citation>
    <scope>NUCLEOTIDE SEQUENCE [LARGE SCALE GENOMIC DNA]</scope>
</reference>
<protein>
    <recommendedName>
        <fullName>Transmembrane protein 78</fullName>
    </recommendedName>
</protein>
<evidence type="ECO:0000255" key="1"/>
<evidence type="ECO:0000305" key="2"/>
<gene>
    <name type="primary">TMEM78</name>
</gene>
<accession>Q5T7P6</accession>
<accession>Q8N802</accession>
<comment type="subcellular location">
    <subcellularLocation>
        <location evidence="2">Membrane</location>
        <topology evidence="2">Multi-pass membrane protein</topology>
    </subcellularLocation>
</comment>
<sequence length="136" mass="15193">MWLDTRNLGIVISCWKGVCVPQTTTLEMFYNDNDRVEESSNSYQIRREFLLPACLPAFLSFSTSFSFFLSFLPLSLSLFLPFFPSFFLSLSLSPSFLPSFLRQGLALSPRLECDGAIMIHCSLNIPGSSDPPTSAS</sequence>
<name>TMM78_HUMAN</name>
<organism>
    <name type="scientific">Homo sapiens</name>
    <name type="common">Human</name>
    <dbReference type="NCBI Taxonomy" id="9606"/>
    <lineage>
        <taxon>Eukaryota</taxon>
        <taxon>Metazoa</taxon>
        <taxon>Chordata</taxon>
        <taxon>Craniata</taxon>
        <taxon>Vertebrata</taxon>
        <taxon>Euteleostomi</taxon>
        <taxon>Mammalia</taxon>
        <taxon>Eutheria</taxon>
        <taxon>Euarchontoglires</taxon>
        <taxon>Primates</taxon>
        <taxon>Haplorrhini</taxon>
        <taxon>Catarrhini</taxon>
        <taxon>Hominidae</taxon>
        <taxon>Homo</taxon>
    </lineage>
</organism>
<keyword id="KW-0472">Membrane</keyword>
<keyword id="KW-1185">Reference proteome</keyword>
<keyword id="KW-0812">Transmembrane</keyword>
<keyword id="KW-1133">Transmembrane helix</keyword>